<protein>
    <recommendedName>
        <fullName evidence="1">Protein Nef</fullName>
    </recommendedName>
    <alternativeName>
        <fullName evidence="1">3'ORF</fullName>
    </alternativeName>
    <alternativeName>
        <fullName evidence="1">Negative factor</fullName>
        <shortName evidence="1">F-protein</shortName>
    </alternativeName>
    <component>
        <recommendedName>
            <fullName evidence="1">C-terminal core protein</fullName>
        </recommendedName>
    </component>
</protein>
<organismHost>
    <name type="scientific">Homo sapiens</name>
    <name type="common">Human</name>
    <dbReference type="NCBI Taxonomy" id="9606"/>
</organismHost>
<sequence length="207" mass="23722">MGKIWSKSSLVGWPEIRERIRRQTPEPAVGVGAVSQDLANRGAITTSNTKDNNQTVAWLEAQEEZEVGFPVRPQVPLRPMTYKAAFDLSFFLKEKGGLEGLVWSRKRQEILDLWVYHTQGFFPDWQNYTPGPGVRYPLCFGWCFKLVPLSEEAVEEANEGDNNALLHPICQHGVDDDHKQVLVWRFDSSLARRHVAKELHPDFYKNC</sequence>
<evidence type="ECO:0000255" key="1">
    <source>
        <dbReference type="HAMAP-Rule" id="MF_04078"/>
    </source>
</evidence>
<dbReference type="EMBL" id="AJ271370">
    <property type="protein sequence ID" value="CAB96346.1"/>
    <property type="molecule type" value="Genomic_DNA"/>
</dbReference>
<dbReference type="Proteomes" id="UP000007714">
    <property type="component" value="Segment"/>
</dbReference>
<dbReference type="GO" id="GO:0005576">
    <property type="term" value="C:extracellular region"/>
    <property type="evidence" value="ECO:0007669"/>
    <property type="project" value="UniProtKB-SubCell"/>
</dbReference>
<dbReference type="GO" id="GO:0044178">
    <property type="term" value="C:host cell Golgi membrane"/>
    <property type="evidence" value="ECO:0007669"/>
    <property type="project" value="UniProtKB-SubCell"/>
</dbReference>
<dbReference type="GO" id="GO:0020002">
    <property type="term" value="C:host cell plasma membrane"/>
    <property type="evidence" value="ECO:0007669"/>
    <property type="project" value="UniProtKB-SubCell"/>
</dbReference>
<dbReference type="GO" id="GO:0016020">
    <property type="term" value="C:membrane"/>
    <property type="evidence" value="ECO:0007669"/>
    <property type="project" value="UniProtKB-UniRule"/>
</dbReference>
<dbReference type="GO" id="GO:0044423">
    <property type="term" value="C:virion component"/>
    <property type="evidence" value="ECO:0007669"/>
    <property type="project" value="UniProtKB-UniRule"/>
</dbReference>
<dbReference type="GO" id="GO:0005525">
    <property type="term" value="F:GTP binding"/>
    <property type="evidence" value="ECO:0007669"/>
    <property type="project" value="UniProtKB-UniRule"/>
</dbReference>
<dbReference type="GO" id="GO:0017124">
    <property type="term" value="F:SH3 domain binding"/>
    <property type="evidence" value="ECO:0007669"/>
    <property type="project" value="UniProtKB-UniRule"/>
</dbReference>
<dbReference type="GO" id="GO:0046776">
    <property type="term" value="P:symbiont-mediated suppression of host antigen processing and presentation of peptide antigen via MHC class I"/>
    <property type="evidence" value="ECO:0007669"/>
    <property type="project" value="UniProtKB-UniRule"/>
</dbReference>
<dbReference type="GO" id="GO:0039505">
    <property type="term" value="P:symbiont-mediated suppression of host antigen processing and presentation of peptide antigen via MHC class II"/>
    <property type="evidence" value="ECO:0007669"/>
    <property type="project" value="UniProtKB-UniRule"/>
</dbReference>
<dbReference type="GO" id="GO:0140321">
    <property type="term" value="P:symbiont-mediated suppression of host autophagy"/>
    <property type="evidence" value="ECO:0007669"/>
    <property type="project" value="UniProtKB-KW"/>
</dbReference>
<dbReference type="Gene3D" id="4.10.890.10">
    <property type="entry name" value="HIV 1 nef anchor domain"/>
    <property type="match status" value="1"/>
</dbReference>
<dbReference type="Gene3D" id="3.30.62.10">
    <property type="entry name" value="Nef Regulatory Factor"/>
    <property type="match status" value="1"/>
</dbReference>
<dbReference type="HAMAP" id="MF_04078">
    <property type="entry name" value="NEF_HIV"/>
    <property type="match status" value="1"/>
</dbReference>
<dbReference type="InterPro" id="IPR027480">
    <property type="entry name" value="HIV-1_Nef_anchor_sf"/>
</dbReference>
<dbReference type="InterPro" id="IPR027481">
    <property type="entry name" value="HIV-1_Nef_core_sf"/>
</dbReference>
<dbReference type="InterPro" id="IPR001558">
    <property type="entry name" value="HIV_Nef"/>
</dbReference>
<dbReference type="Pfam" id="PF00469">
    <property type="entry name" value="F-protein"/>
    <property type="match status" value="1"/>
</dbReference>
<dbReference type="SUPFAM" id="SSF55671">
    <property type="entry name" value="Regulatory factor Nef"/>
    <property type="match status" value="1"/>
</dbReference>
<gene>
    <name evidence="1" type="primary">nef</name>
</gene>
<comment type="function">
    <text evidence="1">Factor of infectivity and pathogenicity, required for optimal virus replication. Alters numerous pathways of T-lymphocyte function and down-regulates immunity surface molecules in order to evade host defense and increase viral infectivity. Alters the functionality of other immunity cells, like dendritic cells, monocytes/macrophages and NK cells.</text>
</comment>
<comment type="function">
    <text evidence="1">In infected CD4(+) T-lymphocytes, down-regulates the surface MHC-I, mature MHC-II, CD4, CD28, CCR5 and CXCR4 molecules. Mediates internalization and degradation of host CD4 through the interaction of with the cytoplasmic tail of CD4, the recruitment of AP-2 (clathrin adapter protein complex 2), internalization through clathrin coated pits, and subsequent transport to endosomes and lysosomes for degradation. Diverts host MHC-I molecules to the trans-Golgi network-associated endosomal compartments by an endocytic pathway to finally target them for degradation. MHC-I down-regulation may involve AP-1 (clathrin adapter protein complex 1) or possibly Src family kinase-ZAP70/Syk-PI3K cascade recruited by PACS2. In consequence infected cells are masked for immune recognition by cytotoxic T-lymphocytes. Decreasing the number of immune receptors also prevents reinfection by more HIV particles (superinfection). Down-regulates host SERINC3 and SERINC5 thereby excluding these proteins from the viral particles. Virion infectivity is drastically higher when SERINC3 or SERINC5 are excluded from the viral envelope, because these host antiviral proteins impair the membrane fusion event necessary for subsequent virion penetration.</text>
</comment>
<comment type="function">
    <text evidence="1">Bypasses host T-cell signaling by inducing a transcriptional program nearly identical to that of anti-CD3 cell activation. Interaction with TCR-zeta chain up-regulates the Fas ligand (FasL). Increasing surface FasL molecules and decreasing surface MHC-I molecules on infected CD4(+) cells send attacking cytotoxic CD8+ T-lymphocytes into apoptosis.</text>
</comment>
<comment type="function">
    <text evidence="1">Plays a role in optimizing the host cell environment for viral replication without causing cell death by apoptosis. Protects the infected cells from apoptosis in order to keep them alive until the next virus generation is ready to strike. Inhibits the Fas and TNFR-mediated death signals by blocking MAP3K5/ASK1. Decreases the half-life of TP53, protecting the infected cell against p53-mediated apoptosis. Inhibits the apoptotic signals regulated by the Bcl-2 family proteins through the formation of a Nef/PI3-kinase/PAK2 complex that leads to activation of PAK2 and induces phosphorylation of host BAD.</text>
</comment>
<comment type="function">
    <text evidence="1">Extracellular Nef protein targets CD4(+) T-lymphocytes for apoptosis by interacting with CXCR4 surface receptors.</text>
</comment>
<comment type="subunit">
    <text evidence="1">Monomer; cytosolic form. Homodimer; membrane bound form. Interacts with Nef associated p21-activated kinase (PAK2); this interaction activates PAK2. Associates with the Nef-MHC-I-AP1 complex; this complex is required for MHC-I internalization. Interacts (via C-terminus) with host PI3-kinase. Interacts with host PACS1; this interaction seems to be weak. Interacts with host PACS2. Interacts with host LCK and MAPK3; these interactions inhibit the kinase activity of the latter. Interacts with host ATP6V1H; this interaction may play a role in CD4 endocytosis. Associates with the CD4-Nef-AP2 complex; this complex is required for CD4 internalization. Interacts with host AP2 subunit alpha and AP2 subunit sigma2. Interacts with TCR-zeta chain; this interaction up-regulates the Fas ligand (FasL) surface expression. Interacts with host HCK, LYN, and SRC; these interactions activate the Src family kinases. Interacts with MAP3K5; this interaction inhibits the Fas and TNFR-mediated death signals. Interacts with beta-COP and PTE1. Interacts with human RACK1; this increases Nef phosphorylation by PKC. Interacts with TP53; this interaction decreases the half-life of TP53, protecting the infected cell against p53-mediated apoptosis.</text>
</comment>
<comment type="subcellular location">
    <subcellularLocation>
        <location evidence="1">Host cell membrane</location>
        <topology evidence="1">Lipid-anchor</topology>
        <orientation evidence="1">Cytoplasmic side</orientation>
    </subcellularLocation>
    <subcellularLocation>
        <location evidence="1">Virion</location>
    </subcellularLocation>
    <subcellularLocation>
        <location evidence="1">Secreted</location>
    </subcellularLocation>
    <subcellularLocation>
        <location evidence="1">Host Golgi apparatus membrane</location>
    </subcellularLocation>
    <text evidence="1">TGN localization requires PACS1. Associates with the inner plasma membrane through its N-terminal domain. Nef stimulates its own export via the release of exosomes. Incorporated in virions at a rate of about 10 molecules per virion, where it is cleaved.</text>
</comment>
<comment type="induction">
    <text evidence="1">Expressed early in the viral replication cycle.</text>
</comment>
<comment type="domain">
    <text evidence="1">The N-terminal domain is composed of the N-myristoyl glycine and of a cluster of positively charged amino acids. It is required for inner plasma membrane targeting of Nef and virion incorporation, and thereby for infectivity. This domain is also involved in binding to TP53.</text>
</comment>
<comment type="domain">
    <text evidence="1">The SH3-binding domain constituted of PxxP motifs mediates binding to several Src family proteins thereby regulating their tyrosine kinase activity. The same motifs also mediates the association with MAPK3, PI3-kinase and TCR-zeta.</text>
</comment>
<comment type="domain">
    <text evidence="1">The dileucine internalization motif and a diacidic motif seem to be required for binding to AP-2.</text>
</comment>
<comment type="domain">
    <text evidence="1">The acidic region binds to the sorting protein PACS-2, which targets Nef to the paranuclear region, enabling the PxxP motif to direct assembly of an SFK/ZAP-70/PI3K complex that accelerates endocytosis of cell-surface MHC-I.</text>
</comment>
<comment type="PTM">
    <text evidence="1">The virion-associated Nef proteins are cleaved by the viral protease to release the soluble C-terminal core protein. Nef is probably cleaved concomitantly with viral structural proteins on maturation of virus particles.</text>
</comment>
<comment type="PTM">
    <text evidence="1">Myristoylated.</text>
</comment>
<comment type="PTM">
    <text evidence="1">Phosphorylated on serine residues, probably by host PKCdelta and theta.</text>
</comment>
<comment type="miscellaneous">
    <text evidence="1">HIV-1 lineages are divided in three main groups, M (for Major), O (for Outlier), and N (for New, or Non-M, Non-O). The vast majority of strains found worldwide belong to the group M. Group O seems to be endemic to and largely confined to Cameroon and neighboring countries in West Central Africa, where these viruses represent a small minority of HIV-1 strains. The group N is represented by a limited number of isolates from Cameroonian persons. The group M is further subdivided in 9 clades or subtypes (A to D, F to H, J and K).</text>
</comment>
<comment type="similarity">
    <text evidence="1">Belongs to the lentivirus primate group Nef protein family.</text>
</comment>
<reference key="1">
    <citation type="journal article" date="2004" name="AIDS">
        <title>Phylogenetic characteristics of three new HIV-1 N strains and implications for the origin of group N.</title>
        <authorList>
            <person name="Roques P."/>
            <person name="Robertson D.L."/>
            <person name="Souquiere S."/>
            <person name="Apetrei C."/>
            <person name="Nerrienet E."/>
            <person name="Barre-Sinoussi F."/>
            <person name="Muller-Trutwin M."/>
            <person name="Simon F."/>
        </authorList>
    </citation>
    <scope>NUCLEOTIDE SEQUENCE [GENOMIC DNA]</scope>
</reference>
<organism>
    <name type="scientific">Human immunodeficiency virus type 1 group N (isolate YBF106)</name>
    <name type="common">HIV-1</name>
    <dbReference type="NCBI Taxonomy" id="388819"/>
    <lineage>
        <taxon>Viruses</taxon>
        <taxon>Riboviria</taxon>
        <taxon>Pararnavirae</taxon>
        <taxon>Artverviricota</taxon>
        <taxon>Revtraviricetes</taxon>
        <taxon>Ortervirales</taxon>
        <taxon>Retroviridae</taxon>
        <taxon>Orthoretrovirinae</taxon>
        <taxon>Lentivirus</taxon>
        <taxon>Human immunodeficiency virus type 1</taxon>
    </lineage>
</organism>
<feature type="initiator methionine" description="Removed; by host" evidence="1">
    <location>
        <position position="1"/>
    </location>
</feature>
<feature type="chain" id="PRO_0000244813" description="Protein Nef" evidence="1">
    <location>
        <begin position="2"/>
        <end position="207"/>
    </location>
</feature>
<feature type="chain" id="PRO_0000244814" description="C-terminal core protein" evidence="1">
    <location>
        <begin position="59"/>
        <end position="207"/>
    </location>
</feature>
<feature type="region of interest" description="Acidic; interacts with host PACS1 and PACS2; stabilizes the interaction of NEF/MHC-I with host AP1M1; necessary for MHC-I internalization" evidence="1">
    <location>
        <begin position="63"/>
        <end position="66"/>
    </location>
</feature>
<feature type="region of interest" description="SH3-binding; interaction with Src family tyrosine kinases" evidence="1">
    <location>
        <begin position="70"/>
        <end position="79"/>
    </location>
</feature>
<feature type="region of interest" description="Mediates dimerization, Nef-PTE1 interaction" evidence="1">
    <location>
        <begin position="109"/>
        <end position="125"/>
    </location>
</feature>
<feature type="region of interest" description="Binding to ATP6V1H" evidence="1">
    <location>
        <begin position="149"/>
        <end position="181"/>
    </location>
</feature>
<feature type="short sequence motif" description="PxxP; stabilizes the interaction of NEF/MHC-I with host AP1M1; necessary for MHC-I internalization" evidence="1">
    <location>
        <begin position="73"/>
        <end position="76"/>
    </location>
</feature>
<feature type="short sequence motif" description="Dileucine internalization motif; necessary for CD4 internalization" evidence="1">
    <location>
        <begin position="165"/>
        <end position="166"/>
    </location>
</feature>
<feature type="short sequence motif" description="Diacidic; necessary for CD4 internalization" evidence="1">
    <location>
        <begin position="175"/>
        <end position="176"/>
    </location>
</feature>
<feature type="site" description="Cleavage; by viral protease" evidence="1">
    <location>
        <begin position="58"/>
        <end position="59"/>
    </location>
</feature>
<feature type="modified residue" description="Phosphoserine; by host" evidence="1">
    <location>
        <position position="6"/>
    </location>
</feature>
<feature type="lipid moiety-binding region" description="N-myristoyl glycine; by host" evidence="1">
    <location>
        <position position="2"/>
    </location>
</feature>
<keyword id="KW-0014">AIDS</keyword>
<keyword id="KW-0053">Apoptosis</keyword>
<keyword id="KW-0244">Early protein</keyword>
<keyword id="KW-1032">Host cell membrane</keyword>
<keyword id="KW-1040">Host Golgi apparatus</keyword>
<keyword id="KW-1043">Host membrane</keyword>
<keyword id="KW-0945">Host-virus interaction</keyword>
<keyword id="KW-1080">Inhibition of host adaptive immune response by virus</keyword>
<keyword id="KW-1083">Inhibition of host autophagy by virus</keyword>
<keyword id="KW-1115">Inhibition of host MHC class I molecule presentation by virus</keyword>
<keyword id="KW-1116">Inhibition of host MHC class II molecule presentation by virus</keyword>
<keyword id="KW-0449">Lipoprotein</keyword>
<keyword id="KW-0472">Membrane</keyword>
<keyword id="KW-0519">Myristate</keyword>
<keyword id="KW-0597">Phosphoprotein</keyword>
<keyword id="KW-0964">Secreted</keyword>
<keyword id="KW-0729">SH3-binding</keyword>
<keyword id="KW-0899">Viral immunoevasion</keyword>
<keyword id="KW-0946">Virion</keyword>
<keyword id="KW-0843">Virulence</keyword>
<accession>Q9IDV1</accession>
<name>NEF_HV1YB</name>
<proteinExistence type="inferred from homology"/>